<proteinExistence type="evidence at protein level"/>
<feature type="signal peptide" evidence="2">
    <location>
        <begin position="1"/>
        <end position="21"/>
    </location>
</feature>
<feature type="chain" id="PRO_0000430765" description="Beta-peptidyl aminopeptidase BapA alpha subunit" evidence="1">
    <location>
        <begin position="22"/>
        <end position="270"/>
    </location>
</feature>
<feature type="chain" id="PRO_0000430766" description="Beta-peptidyl aminopeptidase BapA beta subunit" evidence="1">
    <location>
        <begin position="271"/>
        <end position="396"/>
    </location>
</feature>
<feature type="active site" description="Nucleophile" evidence="1">
    <location>
        <position position="271"/>
    </location>
</feature>
<feature type="active site" description="Proton donor/acceptor" evidence="1">
    <location>
        <position position="309"/>
    </location>
</feature>
<feature type="active site" description="Proton donor/acceptor" evidence="1">
    <location>
        <position position="311"/>
    </location>
</feature>
<accession>A0MTQ2</accession>
<reference key="1">
    <citation type="submission" date="2006-10" db="EMBL/GenBank/DDBJ databases">
        <authorList>
            <person name="Geueke B."/>
            <person name="Kohler H.-P.E."/>
        </authorList>
    </citation>
    <scope>NUCLEOTIDE SEQUENCE [GENOMIC DNA]</scope>
    <source>
        <strain evidence="6">DSM 19791 / CIP 109169 / JCM 13185 / KCTC 12019 / NCIMB 14270 / Y2</strain>
    </source>
</reference>
<reference key="2">
    <citation type="journal article" date="2006" name="FEBS J.">
        <title>Bacterial beta-peptidyl aminopeptidases with unique substrate specificities for beta-oligopeptides and mixed beta,alpha-oligopeptides.</title>
        <authorList>
            <person name="Geueke B."/>
            <person name="Heck T."/>
            <person name="Limbach M."/>
            <person name="Nesatyy V."/>
            <person name="Seebach D."/>
            <person name="Kohler H.P."/>
        </authorList>
    </citation>
    <scope>CATALYTIC ACTIVITY</scope>
    <scope>FUNCTION</scope>
    <scope>SUBUNIT</scope>
    <scope>ACTIVITY REGULATION</scope>
    <scope>BIOPHYSICOCHEMICAL PROPERTIES</scope>
</reference>
<name>BAPA_SPHMI</name>
<sequence>MHYLKFPAIIAGMLLAGAASAEGPRARDLGVPFAGKPGANNAITDVAGVEVGYVSLISGEGKLERGKGPVRTGVTAVLPRGKESRTPVYAGWETSNAAGEMTGTVWLEERGYFDGPMMITNTHSVGVVRDAVVGWLADVKWPGAWFTPVVAETYDGMLNDINGFHVKPEHALRAIQTAASGPVAEGNVGGGVGMQCFGFKGGTGTASRVVEMDGKSYTVGVLVQCNFGMRPWLRVAGAPVGEELAGKYLPETRGTQTAAATNNGVAPGDGSIIVVMATDAPMLPHQLKRLAKRAAAGMGRMGDAGSNGSGDIFVAFSTANANVQSVGGNVISVETMPNDKLTLIFEAATQATEEAITNVLVAADTLTGVNGYTIQRLPHAELRAILKKYRRLAAAK</sequence>
<comment type="function">
    <text evidence="3">Beta-aminopeptidase that can cleave synthetic beta-peptides which consist of backbone-elongated beta-amino acid residues that are not processed by common proteolytic enzymes. Can cleave the beta-peptides beta-homoVal-beta-homoAla-beta-homoLeu and beta-homoAla-beta-homoLeu. Requires a beta-amino acid at the N-terminus of peptide substrates and cleaves the peptide bond between the N-terminal beta-amino acid and the amino acid at the second position of tripeptidic substrates of the general structure H-betahXaa-Ile-betahTyr-OH according to the following preferences with regard to the side chain of the N-terminal beta-amino acid: aliphatic and aromatic &gt; OH-containing &gt; hydrogen, basic and polar. beta-homoVal-beta-homoAla-beta-homoLeu and beta-homoAla-beta-homoLeu.</text>
</comment>
<comment type="catalytic activity">
    <reaction evidence="3">
        <text>Cleaves N-terminal beta-homoamino acids from peptides composed of 2 to 6 amino acids.</text>
        <dbReference type="EC" id="3.4.11.25"/>
    </reaction>
</comment>
<comment type="activity regulation">
    <text evidence="3">Inhibited by AEBSF (4-(2-aminoethyl)benzenesulfonyl fluoride, Pefabloc SC).</text>
</comment>
<comment type="biophysicochemical properties">
    <kinetics>
        <KM>39 mM for beta-homoVal-beta-homoAla-beta-homoLeu</KM>
        <KM>41 mM for beta-homoAla-beta-homoLeu</KM>
        <KM>4.4 mM for beta-3homoAla-pNA</KM>
        <Vmax>0.84 umol/min/mg enzyme with beta-homoVal-beta-homoAla-beta-homoLeu as substrate</Vmax>
        <Vmax>3.1 umol/min/mg enzyme with beta-homoAla-beta-homoLeu as substrate</Vmax>
        <Vmax evidence="3">0.063 umol/min/mg enzyme with carnosine as substrate</Vmax>
        <Vmax evidence="3">0.047 umol/min/mg enzyme with beta-homoGly-Ile-beta-homoTyr as substrate</Vmax>
        <Vmax evidence="3">0.45 umol/min/mg enzyme with beta-homoVal-Ile-beta-homoTyr as substrate</Vmax>
        <Vmax evidence="3">0.38 umol/min/mg enzyme with beta-homoVal-Ile-beta-homoTyr as substrate</Vmax>
        <Vmax evidence="3">0.46 umol/min/mg enzyme with beta-homoPhe-Ile-beta-homoTyr as substrate</Vmax>
        <Vmax evidence="3">0.21 umol/min/mg enzyme with beta-homoTyr-Ile-beta-homoTyr as substrate</Vmax>
        <Vmax evidence="3">0.04 umol/min/mg enzyme with beta-homoTrp-Ile-beta-homoTyr as substrate</Vmax>
        <Vmax evidence="3">0.4 umol/min/mg enzyme with beta-homoSer-Ile-beta-homoTyr as substrate</Vmax>
        <Vmax evidence="3">0.05 umol/min/mg enzyme with beta-homoThr-Ile-beta-homoTyr as substrate</Vmax>
        <Vmax evidence="3">0.011 umol/min/mg enzyme with beta-homoHis-Ile-beta-homoTyr as substrate</Vmax>
        <Vmax evidence="3">0.015 umol/min/mg enzyme with beta-homoLys-Ile-beta-homoTyr as substrate</Vmax>
        <Vmax evidence="3">0.011 umol/min/mg enzyme with beta-homoArg-Ile-beta-homoTyr as substrate</Vmax>
        <Vmax evidence="3">0.016 umol/min/mg enzyme with D-beta-homoVal-Ile-beta-homoTyr as substrate</Vmax>
    </kinetics>
    <phDependence>
        <text evidence="3">Optimum pH is 10.</text>
    </phDependence>
</comment>
<comment type="subunit">
    <text evidence="4">Heterooctamer of 4 heterodimers ((alpha:beta)4); each heterodimer is composed of an alpha subunit and a beta subunit processed from the same precursor.</text>
</comment>
<comment type="subcellular location">
    <subcellularLocation>
        <location evidence="1">Periplasm</location>
    </subcellularLocation>
</comment>
<comment type="PTM">
    <text evidence="1">Autoproteolytic processing to generate the alpha and beta subunit is required for self-activation and is proposed to use a similar mechanism as substrate cleavage.</text>
</comment>
<comment type="miscellaneous">
    <text evidence="4">S.microcystinivorans can degrade microcystin, a cyclic, toxic heptapeptide that contains beta-peptidic substructures.</text>
</comment>
<comment type="similarity">
    <text evidence="5">Belongs to the peptidase S58 family.</text>
</comment>
<protein>
    <recommendedName>
        <fullName evidence="4">Beta-peptidyl aminopeptidase BapA</fullName>
        <ecNumber evidence="3">3.4.11.25</ecNumber>
    </recommendedName>
    <component>
        <recommendedName>
            <fullName evidence="4">Beta-peptidyl aminopeptidase BapA alpha subunit</fullName>
        </recommendedName>
    </component>
    <component>
        <recommendedName>
            <fullName evidence="4">Beta-peptidyl aminopeptidase BapA beta subunit</fullName>
        </recommendedName>
    </component>
</protein>
<evidence type="ECO:0000250" key="1">
    <source>
        <dbReference type="UniProtKB" id="Q52VH2"/>
    </source>
</evidence>
<evidence type="ECO:0000255" key="2"/>
<evidence type="ECO:0000269" key="3">
    <source>
    </source>
</evidence>
<evidence type="ECO:0000303" key="4">
    <source>
    </source>
</evidence>
<evidence type="ECO:0000305" key="5"/>
<evidence type="ECO:0000312" key="6">
    <source>
        <dbReference type="EMBL" id="ABK40073.1"/>
    </source>
</evidence>
<organism evidence="6">
    <name type="scientific">Sphingosinicella microcystinivorans</name>
    <dbReference type="NCBI Taxonomy" id="335406"/>
    <lineage>
        <taxon>Bacteria</taxon>
        <taxon>Pseudomonadati</taxon>
        <taxon>Pseudomonadota</taxon>
        <taxon>Alphaproteobacteria</taxon>
        <taxon>Sphingomonadales</taxon>
        <taxon>Sphingosinicellaceae</taxon>
        <taxon>Sphingosinicella</taxon>
    </lineage>
</organism>
<dbReference type="EC" id="3.4.11.25" evidence="3"/>
<dbReference type="EMBL" id="EF043283">
    <property type="protein sequence ID" value="ABK40073.1"/>
    <property type="molecule type" value="Genomic_DNA"/>
</dbReference>
<dbReference type="RefSeq" id="WP_121051130.1">
    <property type="nucleotide sequence ID" value="NZ_AP018711.1"/>
</dbReference>
<dbReference type="SMR" id="A0MTQ2"/>
<dbReference type="MEROPS" id="P01.003"/>
<dbReference type="OrthoDB" id="9770388at2"/>
<dbReference type="BRENDA" id="3.4.11.25">
    <property type="organism ID" value="12100"/>
</dbReference>
<dbReference type="GO" id="GO:0042597">
    <property type="term" value="C:periplasmic space"/>
    <property type="evidence" value="ECO:0007669"/>
    <property type="project" value="UniProtKB-SubCell"/>
</dbReference>
<dbReference type="GO" id="GO:0004177">
    <property type="term" value="F:aminopeptidase activity"/>
    <property type="evidence" value="ECO:0007669"/>
    <property type="project" value="UniProtKB-KW"/>
</dbReference>
<dbReference type="GO" id="GO:0006508">
    <property type="term" value="P:proteolysis"/>
    <property type="evidence" value="ECO:0007669"/>
    <property type="project" value="UniProtKB-KW"/>
</dbReference>
<dbReference type="CDD" id="cd02253">
    <property type="entry name" value="DmpA"/>
    <property type="match status" value="1"/>
</dbReference>
<dbReference type="Gene3D" id="3.60.70.12">
    <property type="entry name" value="L-amino peptidase D-ALA esterase/amidase"/>
    <property type="match status" value="1"/>
</dbReference>
<dbReference type="InterPro" id="IPR016117">
    <property type="entry name" value="ArgJ-like_dom_sf"/>
</dbReference>
<dbReference type="InterPro" id="IPR005321">
    <property type="entry name" value="Peptidase_S58_DmpA"/>
</dbReference>
<dbReference type="PANTHER" id="PTHR36512:SF3">
    <property type="entry name" value="BLR5678 PROTEIN"/>
    <property type="match status" value="1"/>
</dbReference>
<dbReference type="PANTHER" id="PTHR36512">
    <property type="entry name" value="D-AMINOPEPTIDASE"/>
    <property type="match status" value="1"/>
</dbReference>
<dbReference type="Pfam" id="PF03576">
    <property type="entry name" value="Peptidase_S58"/>
    <property type="match status" value="1"/>
</dbReference>
<dbReference type="SUPFAM" id="SSF56266">
    <property type="entry name" value="DmpA/ArgJ-like"/>
    <property type="match status" value="1"/>
</dbReference>
<keyword id="KW-0031">Aminopeptidase</keyword>
<keyword id="KW-0378">Hydrolase</keyword>
<keyword id="KW-0574">Periplasm</keyword>
<keyword id="KW-0645">Protease</keyword>
<keyword id="KW-0732">Signal</keyword>